<protein>
    <recommendedName>
        <fullName evidence="1">Probable septum site-determining protein MinC</fullName>
    </recommendedName>
</protein>
<accession>B8E0T7</accession>
<dbReference type="EMBL" id="CP001251">
    <property type="protein sequence ID" value="ACK42674.1"/>
    <property type="molecule type" value="Genomic_DNA"/>
</dbReference>
<dbReference type="RefSeq" id="WP_012583752.1">
    <property type="nucleotide sequence ID" value="NC_011661.1"/>
</dbReference>
<dbReference type="RefSeq" id="YP_002353288.1">
    <property type="nucleotide sequence ID" value="NC_011661.1"/>
</dbReference>
<dbReference type="SMR" id="B8E0T7"/>
<dbReference type="STRING" id="515635.Dtur_1400"/>
<dbReference type="EnsemblBacteria" id="ACK42674">
    <property type="protein sequence ID" value="ACK42674"/>
    <property type="gene ID" value="Dtur_1400"/>
</dbReference>
<dbReference type="KEGG" id="dtu:Dtur_1400"/>
<dbReference type="eggNOG" id="COG0850">
    <property type="taxonomic scope" value="Bacteria"/>
</dbReference>
<dbReference type="HOGENOM" id="CLU_048711_2_0_0"/>
<dbReference type="InParanoid" id="B8E0T7"/>
<dbReference type="OrthoDB" id="9810675at2"/>
<dbReference type="Proteomes" id="UP000007719">
    <property type="component" value="Chromosome"/>
</dbReference>
<dbReference type="GO" id="GO:0000902">
    <property type="term" value="P:cell morphogenesis"/>
    <property type="evidence" value="ECO:0007669"/>
    <property type="project" value="InterPro"/>
</dbReference>
<dbReference type="GO" id="GO:0000917">
    <property type="term" value="P:division septum assembly"/>
    <property type="evidence" value="ECO:0007669"/>
    <property type="project" value="UniProtKB-KW"/>
</dbReference>
<dbReference type="GO" id="GO:0051302">
    <property type="term" value="P:regulation of cell division"/>
    <property type="evidence" value="ECO:0007669"/>
    <property type="project" value="InterPro"/>
</dbReference>
<dbReference type="GO" id="GO:1901891">
    <property type="term" value="P:regulation of cell septum assembly"/>
    <property type="evidence" value="ECO:0007669"/>
    <property type="project" value="InterPro"/>
</dbReference>
<dbReference type="Gene3D" id="2.160.20.70">
    <property type="match status" value="1"/>
</dbReference>
<dbReference type="HAMAP" id="MF_00267">
    <property type="entry name" value="MinC"/>
    <property type="match status" value="1"/>
</dbReference>
<dbReference type="InterPro" id="IPR016098">
    <property type="entry name" value="CAP/MinC_C"/>
</dbReference>
<dbReference type="InterPro" id="IPR013033">
    <property type="entry name" value="MinC"/>
</dbReference>
<dbReference type="InterPro" id="IPR036145">
    <property type="entry name" value="MinC_C_sf"/>
</dbReference>
<dbReference type="InterPro" id="IPR007874">
    <property type="entry name" value="MinC_N"/>
</dbReference>
<dbReference type="InterPro" id="IPR005526">
    <property type="entry name" value="Septum_form_inhib_MinC_C"/>
</dbReference>
<dbReference type="PANTHER" id="PTHR34108">
    <property type="entry name" value="SEPTUM SITE-DETERMINING PROTEIN MINC"/>
    <property type="match status" value="1"/>
</dbReference>
<dbReference type="PANTHER" id="PTHR34108:SF1">
    <property type="entry name" value="SEPTUM SITE-DETERMINING PROTEIN MINC"/>
    <property type="match status" value="1"/>
</dbReference>
<dbReference type="Pfam" id="PF03775">
    <property type="entry name" value="MinC_C"/>
    <property type="match status" value="1"/>
</dbReference>
<dbReference type="Pfam" id="PF05209">
    <property type="entry name" value="MinC_N"/>
    <property type="match status" value="1"/>
</dbReference>
<dbReference type="SUPFAM" id="SSF63848">
    <property type="entry name" value="Cell-division inhibitor MinC, C-terminal domain"/>
    <property type="match status" value="1"/>
</dbReference>
<gene>
    <name evidence="1" type="primary">minC</name>
    <name type="ordered locus">Dtur_1400</name>
</gene>
<comment type="function">
    <text evidence="1">Cell division inhibitor that blocks the formation of polar Z ring septums. Rapidly oscillates between the poles of the cell to destabilize FtsZ filaments that have formed before they mature into polar Z rings. Prevents FtsZ polymerization.</text>
</comment>
<comment type="subunit">
    <text evidence="1">Interacts with MinD and FtsZ.</text>
</comment>
<comment type="similarity">
    <text evidence="1">Belongs to the MinC family.</text>
</comment>
<proteinExistence type="inferred from homology"/>
<organism>
    <name type="scientific">Dictyoglomus turgidum (strain DSM 6724 / Z-1310)</name>
    <dbReference type="NCBI Taxonomy" id="515635"/>
    <lineage>
        <taxon>Bacteria</taxon>
        <taxon>Pseudomonadati</taxon>
        <taxon>Dictyoglomota</taxon>
        <taxon>Dictyoglomia</taxon>
        <taxon>Dictyoglomales</taxon>
        <taxon>Dictyoglomaceae</taxon>
        <taxon>Dictyoglomus</taxon>
    </lineage>
</organism>
<feature type="chain" id="PRO_1000191242" description="Probable septum site-determining protein MinC">
    <location>
        <begin position="1"/>
        <end position="202"/>
    </location>
</feature>
<sequence>MSKISFKGDLKEGIKIIIDPNLNWDEIRNLIVDEIKSKEGFLKGSSIYVDFQGKDIKDEDWQEFRKEIYEKYGIMLSKELYRLRISNSNNAKIVLGPIRSGKSLNVKDNLLVIGDVNSGSEIICNKNVFVLGKVRGSIWAGYENNDKATIFALELEPEKIQIARYILDLSKIKKEKTGVGYWVYVENGEVKLNRYSGGKKNG</sequence>
<keyword id="KW-0131">Cell cycle</keyword>
<keyword id="KW-0132">Cell division</keyword>
<keyword id="KW-1185">Reference proteome</keyword>
<keyword id="KW-0717">Septation</keyword>
<name>MINC_DICTD</name>
<reference key="1">
    <citation type="journal article" date="2016" name="Front. Microbiol.">
        <title>The complete genome sequence of hyperthermophile Dictyoglomus turgidum DSM 6724 reveals a specialized carbohydrate fermentor.</title>
        <authorList>
            <person name="Brumm P.J."/>
            <person name="Gowda K."/>
            <person name="Robb F.T."/>
            <person name="Mead D.A."/>
        </authorList>
    </citation>
    <scope>NUCLEOTIDE SEQUENCE [LARGE SCALE GENOMIC DNA]</scope>
    <source>
        <strain>DSM 6724 / Z-1310</strain>
    </source>
</reference>
<evidence type="ECO:0000255" key="1">
    <source>
        <dbReference type="HAMAP-Rule" id="MF_00267"/>
    </source>
</evidence>